<keyword id="KW-0012">Acyltransferase</keyword>
<keyword id="KW-0808">Transferase</keyword>
<evidence type="ECO:0000255" key="1">
    <source>
        <dbReference type="PROSITE-ProRule" id="PRU10023"/>
    </source>
</evidence>
<evidence type="ECO:0000269" key="2">
    <source>
    </source>
</evidence>
<evidence type="ECO:0000303" key="3">
    <source>
    </source>
</evidence>
<evidence type="ECO:0000305" key="4"/>
<gene>
    <name evidence="3" type="primary">CHS</name>
</gene>
<reference key="1">
    <citation type="journal article" date="2016" name="Front. Plant Sci.">
        <title>A novel class of plant type III polyketide synthase involved in orsellinic acid biosynthesis from Rhododendron dauricum.</title>
        <authorList>
            <person name="Taura F."/>
            <person name="Iijima M."/>
            <person name="Yamanaka E."/>
            <person name="Takahashi H."/>
            <person name="Kenmoku H."/>
            <person name="Saeki H."/>
            <person name="Morimoto S."/>
            <person name="Asakawa Y."/>
            <person name="Kurosaki F."/>
            <person name="Morita H."/>
        </authorList>
    </citation>
    <scope>NUCLEOTIDE SEQUENCE [MRNA]</scope>
    <scope>FUNCTION</scope>
    <scope>CATALYTIC ACTIVITY</scope>
    <scope>PATHWAY</scope>
    <scope>ACTIVE SITES</scope>
    <scope>SUBUNIT</scope>
    <scope>TISSUE SPECIFICITY</scope>
    <source>
        <tissue>Leaf</tissue>
    </source>
</reference>
<organism>
    <name type="scientific">Rhododendron dauricum</name>
    <name type="common">Azalea daurica</name>
    <dbReference type="NCBI Taxonomy" id="880079"/>
    <lineage>
        <taxon>Eukaryota</taxon>
        <taxon>Viridiplantae</taxon>
        <taxon>Streptophyta</taxon>
        <taxon>Embryophyta</taxon>
        <taxon>Tracheophyta</taxon>
        <taxon>Spermatophyta</taxon>
        <taxon>Magnoliopsida</taxon>
        <taxon>eudicotyledons</taxon>
        <taxon>Gunneridae</taxon>
        <taxon>Pentapetalae</taxon>
        <taxon>asterids</taxon>
        <taxon>Ericales</taxon>
        <taxon>Ericaceae</taxon>
        <taxon>Ericoideae</taxon>
        <taxon>Rhodoreae</taxon>
        <taxon>Rhododendron</taxon>
    </lineage>
</organism>
<dbReference type="EC" id="2.3.1.74" evidence="1 2"/>
<dbReference type="EMBL" id="LC133083">
    <property type="protein sequence ID" value="BAV83004.1"/>
    <property type="molecule type" value="mRNA"/>
</dbReference>
<dbReference type="SMR" id="A0A2Z5QL08"/>
<dbReference type="UniPathway" id="UPA00154"/>
<dbReference type="GO" id="GO:0042802">
    <property type="term" value="F:identical protein binding"/>
    <property type="evidence" value="ECO:0000314"/>
    <property type="project" value="UniProtKB"/>
</dbReference>
<dbReference type="GO" id="GO:0016210">
    <property type="term" value="F:naringenin-chalcone synthase activity"/>
    <property type="evidence" value="ECO:0000314"/>
    <property type="project" value="UniProtKB"/>
</dbReference>
<dbReference type="GO" id="GO:0042803">
    <property type="term" value="F:protein homodimerization activity"/>
    <property type="evidence" value="ECO:0000314"/>
    <property type="project" value="UniProtKB"/>
</dbReference>
<dbReference type="GO" id="GO:0009715">
    <property type="term" value="P:chalcone biosynthetic process"/>
    <property type="evidence" value="ECO:0000314"/>
    <property type="project" value="UniProtKB"/>
</dbReference>
<dbReference type="GO" id="GO:0009813">
    <property type="term" value="P:flavonoid biosynthetic process"/>
    <property type="evidence" value="ECO:0007669"/>
    <property type="project" value="UniProtKB-UniPathway"/>
</dbReference>
<dbReference type="GO" id="GO:0030639">
    <property type="term" value="P:polyketide biosynthetic process"/>
    <property type="evidence" value="ECO:0007669"/>
    <property type="project" value="TreeGrafter"/>
</dbReference>
<dbReference type="CDD" id="cd00831">
    <property type="entry name" value="CHS_like"/>
    <property type="match status" value="1"/>
</dbReference>
<dbReference type="FunFam" id="3.40.47.10:FF:000014">
    <property type="entry name" value="Chalcone synthase 1"/>
    <property type="match status" value="1"/>
</dbReference>
<dbReference type="FunFam" id="3.40.47.10:FF:000025">
    <property type="entry name" value="Chalcone synthase 2"/>
    <property type="match status" value="1"/>
</dbReference>
<dbReference type="Gene3D" id="3.40.47.10">
    <property type="match status" value="2"/>
</dbReference>
<dbReference type="InterPro" id="IPR012328">
    <property type="entry name" value="Chalcone/stilbene_synt_C"/>
</dbReference>
<dbReference type="InterPro" id="IPR001099">
    <property type="entry name" value="Chalcone/stilbene_synt_N"/>
</dbReference>
<dbReference type="InterPro" id="IPR018088">
    <property type="entry name" value="Chalcone/stilbene_synthase_AS"/>
</dbReference>
<dbReference type="InterPro" id="IPR011141">
    <property type="entry name" value="Polyketide_synthase_type-III"/>
</dbReference>
<dbReference type="InterPro" id="IPR016039">
    <property type="entry name" value="Thiolase-like"/>
</dbReference>
<dbReference type="PANTHER" id="PTHR11877:SF80">
    <property type="entry name" value="CHALCONE SYNTHASE 1"/>
    <property type="match status" value="1"/>
</dbReference>
<dbReference type="PANTHER" id="PTHR11877">
    <property type="entry name" value="HYDROXYMETHYLGLUTARYL-COA SYNTHASE"/>
    <property type="match status" value="1"/>
</dbReference>
<dbReference type="Pfam" id="PF02797">
    <property type="entry name" value="Chal_sti_synt_C"/>
    <property type="match status" value="1"/>
</dbReference>
<dbReference type="Pfam" id="PF00195">
    <property type="entry name" value="Chal_sti_synt_N"/>
    <property type="match status" value="1"/>
</dbReference>
<dbReference type="PIRSF" id="PIRSF000451">
    <property type="entry name" value="PKS_III"/>
    <property type="match status" value="1"/>
</dbReference>
<dbReference type="SUPFAM" id="SSF53901">
    <property type="entry name" value="Thiolase-like"/>
    <property type="match status" value="2"/>
</dbReference>
<dbReference type="PROSITE" id="PS00441">
    <property type="entry name" value="CHALCONE_SYNTH"/>
    <property type="match status" value="1"/>
</dbReference>
<comment type="function">
    <text evidence="2">The primary product of this enzyme is 4,2',4',6'-tetrahydroxychalcone (also termed naringenin-chalcone or chalcone) which can under specific conditions spontaneously isomerize into naringenin.</text>
</comment>
<comment type="catalytic activity">
    <reaction evidence="1 2">
        <text>(E)-4-coumaroyl-CoA + 3 malonyl-CoA + 3 H(+) = 2',4,4',6'-tetrahydroxychalcone + 3 CO2 + 4 CoA</text>
        <dbReference type="Rhea" id="RHEA:11128"/>
        <dbReference type="ChEBI" id="CHEBI:15378"/>
        <dbReference type="ChEBI" id="CHEBI:15413"/>
        <dbReference type="ChEBI" id="CHEBI:16526"/>
        <dbReference type="ChEBI" id="CHEBI:57287"/>
        <dbReference type="ChEBI" id="CHEBI:57384"/>
        <dbReference type="ChEBI" id="CHEBI:85008"/>
        <dbReference type="EC" id="2.3.1.74"/>
    </reaction>
    <physiologicalReaction direction="left-to-right" evidence="2">
        <dbReference type="Rhea" id="RHEA:11129"/>
    </physiologicalReaction>
</comment>
<comment type="pathway">
    <text evidence="2">Secondary metabolite biosynthesis; flavonoid biosynthesis.</text>
</comment>
<comment type="subunit">
    <text evidence="2">Homodimer.</text>
</comment>
<comment type="tissue specificity">
    <text evidence="2">Mainly expressed in flowers, to a lower extent in young leaves, and barely in mature leaves and twigs.</text>
</comment>
<comment type="similarity">
    <text evidence="4">Belongs to the thiolase-like superfamily. Chalcone/stilbene synthases family.</text>
</comment>
<name>CHS_RHODA</name>
<sequence>MVTVEDVRKAQRAEGPATVMAIGTATPPNCVDQSTYPDFYFRITNSEHKAELKEKFQRMCDKSMIKKRYMYLTEEILKENPSVCEYMAPSLDARQDMVVVEVPKLGKEAATKAIKEWGQPKSKITHLVFCTTSGVDMPGADYQLTKLLGLRPSVKRLMMYQQGCFAGGTVLRLAKDLAENNKGARVLVVCSEITAVTFRGPSDTHLDSLVGQALFGDGAAAIIVGADPVPEVEKPLFELVSAAQTILPDSDGAIDGHLREVGLTFHLLKDVPGLISKNIEKALTEAFQPLGISDWNSIFWIAHPGGPAILDQVELKLSLKPEKLRATRHVLSEYGNMSSACVLFILDEMRRKSAEEGLKTTGEGLEWGVLFGFGPGLTVETVVLHSLCT</sequence>
<accession>A0A2Z5QL08</accession>
<protein>
    <recommendedName>
        <fullName evidence="3">Chalcone synthase</fullName>
        <shortName evidence="3">RdCHS</shortName>
        <ecNumber evidence="1 2">2.3.1.74</ecNumber>
    </recommendedName>
    <alternativeName>
        <fullName evidence="1">Naringenin-chalcone synthase</fullName>
    </alternativeName>
</protein>
<feature type="chain" id="PRO_0000458989" description="Chalcone synthase">
    <location>
        <begin position="1"/>
        <end position="389"/>
    </location>
</feature>
<feature type="active site" evidence="1 3">
    <location>
        <position position="164"/>
    </location>
</feature>
<feature type="active site" evidence="3">
    <location>
        <position position="303"/>
    </location>
</feature>
<feature type="active site" evidence="3">
    <location>
        <position position="336"/>
    </location>
</feature>
<proteinExistence type="evidence at protein level"/>